<name>PUR5_BART1</name>
<proteinExistence type="inferred from homology"/>
<organism>
    <name type="scientific">Bartonella tribocorum (strain CIP 105476 / IBS 506)</name>
    <dbReference type="NCBI Taxonomy" id="382640"/>
    <lineage>
        <taxon>Bacteria</taxon>
        <taxon>Pseudomonadati</taxon>
        <taxon>Pseudomonadota</taxon>
        <taxon>Alphaproteobacteria</taxon>
        <taxon>Hyphomicrobiales</taxon>
        <taxon>Bartonellaceae</taxon>
        <taxon>Bartonella</taxon>
    </lineage>
</organism>
<dbReference type="EC" id="6.3.3.1" evidence="1"/>
<dbReference type="EMBL" id="AM260525">
    <property type="protein sequence ID" value="CAK01703.1"/>
    <property type="molecule type" value="Genomic_DNA"/>
</dbReference>
<dbReference type="RefSeq" id="WP_012231884.1">
    <property type="nucleotide sequence ID" value="NC_010161.1"/>
</dbReference>
<dbReference type="SMR" id="A9IVF6"/>
<dbReference type="KEGG" id="btr:BT_1341"/>
<dbReference type="eggNOG" id="COG0150">
    <property type="taxonomic scope" value="Bacteria"/>
</dbReference>
<dbReference type="HOGENOM" id="CLU_047116_0_0_5"/>
<dbReference type="UniPathway" id="UPA00074">
    <property type="reaction ID" value="UER00129"/>
</dbReference>
<dbReference type="Proteomes" id="UP000001592">
    <property type="component" value="Chromosome"/>
</dbReference>
<dbReference type="GO" id="GO:0005829">
    <property type="term" value="C:cytosol"/>
    <property type="evidence" value="ECO:0007669"/>
    <property type="project" value="TreeGrafter"/>
</dbReference>
<dbReference type="GO" id="GO:0005524">
    <property type="term" value="F:ATP binding"/>
    <property type="evidence" value="ECO:0007669"/>
    <property type="project" value="UniProtKB-KW"/>
</dbReference>
<dbReference type="GO" id="GO:0004637">
    <property type="term" value="F:phosphoribosylamine-glycine ligase activity"/>
    <property type="evidence" value="ECO:0007669"/>
    <property type="project" value="TreeGrafter"/>
</dbReference>
<dbReference type="GO" id="GO:0004641">
    <property type="term" value="F:phosphoribosylformylglycinamidine cyclo-ligase activity"/>
    <property type="evidence" value="ECO:0007669"/>
    <property type="project" value="UniProtKB-UniRule"/>
</dbReference>
<dbReference type="GO" id="GO:0006189">
    <property type="term" value="P:'de novo' IMP biosynthetic process"/>
    <property type="evidence" value="ECO:0007669"/>
    <property type="project" value="UniProtKB-UniRule"/>
</dbReference>
<dbReference type="GO" id="GO:0046084">
    <property type="term" value="P:adenine biosynthetic process"/>
    <property type="evidence" value="ECO:0007669"/>
    <property type="project" value="TreeGrafter"/>
</dbReference>
<dbReference type="CDD" id="cd02196">
    <property type="entry name" value="PurM"/>
    <property type="match status" value="1"/>
</dbReference>
<dbReference type="FunFam" id="3.30.1330.10:FF:000001">
    <property type="entry name" value="Phosphoribosylformylglycinamidine cyclo-ligase"/>
    <property type="match status" value="1"/>
</dbReference>
<dbReference type="FunFam" id="3.90.650.10:FF:000019">
    <property type="entry name" value="Trifunctional purine biosynthetic protein adenosine-3"/>
    <property type="match status" value="1"/>
</dbReference>
<dbReference type="Gene3D" id="3.90.650.10">
    <property type="entry name" value="PurM-like C-terminal domain"/>
    <property type="match status" value="1"/>
</dbReference>
<dbReference type="Gene3D" id="3.30.1330.10">
    <property type="entry name" value="PurM-like, N-terminal domain"/>
    <property type="match status" value="1"/>
</dbReference>
<dbReference type="HAMAP" id="MF_00741">
    <property type="entry name" value="AIRS"/>
    <property type="match status" value="1"/>
</dbReference>
<dbReference type="InterPro" id="IPR010918">
    <property type="entry name" value="PurM-like_C_dom"/>
</dbReference>
<dbReference type="InterPro" id="IPR036676">
    <property type="entry name" value="PurM-like_C_sf"/>
</dbReference>
<dbReference type="InterPro" id="IPR016188">
    <property type="entry name" value="PurM-like_N"/>
</dbReference>
<dbReference type="InterPro" id="IPR036921">
    <property type="entry name" value="PurM-like_N_sf"/>
</dbReference>
<dbReference type="InterPro" id="IPR004733">
    <property type="entry name" value="PurM_cligase"/>
</dbReference>
<dbReference type="NCBIfam" id="TIGR00878">
    <property type="entry name" value="purM"/>
    <property type="match status" value="1"/>
</dbReference>
<dbReference type="PANTHER" id="PTHR10520:SF12">
    <property type="entry name" value="TRIFUNCTIONAL PURINE BIOSYNTHETIC PROTEIN ADENOSINE-3"/>
    <property type="match status" value="1"/>
</dbReference>
<dbReference type="PANTHER" id="PTHR10520">
    <property type="entry name" value="TRIFUNCTIONAL PURINE BIOSYNTHETIC PROTEIN ADENOSINE-3-RELATED"/>
    <property type="match status" value="1"/>
</dbReference>
<dbReference type="Pfam" id="PF00586">
    <property type="entry name" value="AIRS"/>
    <property type="match status" value="1"/>
</dbReference>
<dbReference type="Pfam" id="PF02769">
    <property type="entry name" value="AIRS_C"/>
    <property type="match status" value="1"/>
</dbReference>
<dbReference type="SUPFAM" id="SSF56042">
    <property type="entry name" value="PurM C-terminal domain-like"/>
    <property type="match status" value="1"/>
</dbReference>
<dbReference type="SUPFAM" id="SSF55326">
    <property type="entry name" value="PurM N-terminal domain-like"/>
    <property type="match status" value="1"/>
</dbReference>
<reference key="1">
    <citation type="journal article" date="2007" name="Nat. Genet.">
        <title>Genomic analysis of Bartonella identifies type IV secretion systems as host adaptability factors.</title>
        <authorList>
            <person name="Saenz H.L."/>
            <person name="Engel P."/>
            <person name="Stoeckli M.C."/>
            <person name="Lanz C."/>
            <person name="Raddatz G."/>
            <person name="Vayssier-Taussat M."/>
            <person name="Birtles R."/>
            <person name="Schuster S.C."/>
            <person name="Dehio C."/>
        </authorList>
    </citation>
    <scope>NUCLEOTIDE SEQUENCE [LARGE SCALE GENOMIC DNA]</scope>
    <source>
        <strain>CIP 105476 / IBS 506</strain>
    </source>
</reference>
<feature type="chain" id="PRO_1000083450" description="Phosphoribosylformylglycinamidine cyclo-ligase">
    <location>
        <begin position="1"/>
        <end position="363"/>
    </location>
</feature>
<comment type="catalytic activity">
    <reaction evidence="1">
        <text>2-formamido-N(1)-(5-O-phospho-beta-D-ribosyl)acetamidine + ATP = 5-amino-1-(5-phospho-beta-D-ribosyl)imidazole + ADP + phosphate + H(+)</text>
        <dbReference type="Rhea" id="RHEA:23032"/>
        <dbReference type="ChEBI" id="CHEBI:15378"/>
        <dbReference type="ChEBI" id="CHEBI:30616"/>
        <dbReference type="ChEBI" id="CHEBI:43474"/>
        <dbReference type="ChEBI" id="CHEBI:137981"/>
        <dbReference type="ChEBI" id="CHEBI:147287"/>
        <dbReference type="ChEBI" id="CHEBI:456216"/>
        <dbReference type="EC" id="6.3.3.1"/>
    </reaction>
</comment>
<comment type="pathway">
    <text evidence="1">Purine metabolism; IMP biosynthesis via de novo pathway; 5-amino-1-(5-phospho-D-ribosyl)imidazole from N(2)-formyl-N(1)-(5-phospho-D-ribosyl)glycinamide: step 2/2.</text>
</comment>
<comment type="subcellular location">
    <subcellularLocation>
        <location evidence="1">Cytoplasm</location>
    </subcellularLocation>
</comment>
<comment type="similarity">
    <text evidence="1">Belongs to the AIR synthase family.</text>
</comment>
<evidence type="ECO:0000255" key="1">
    <source>
        <dbReference type="HAMAP-Rule" id="MF_00741"/>
    </source>
</evidence>
<protein>
    <recommendedName>
        <fullName evidence="1">Phosphoribosylformylglycinamidine cyclo-ligase</fullName>
        <ecNumber evidence="1">6.3.3.1</ecNumber>
    </recommendedName>
    <alternativeName>
        <fullName evidence="1">AIR synthase</fullName>
    </alternativeName>
    <alternativeName>
        <fullName evidence="1">AIRS</fullName>
    </alternativeName>
    <alternativeName>
        <fullName evidence="1">Phosphoribosyl-aminoimidazole synthetase</fullName>
    </alternativeName>
</protein>
<gene>
    <name evidence="1" type="primary">purM</name>
    <name type="ordered locus">BT_1341</name>
</gene>
<sequence length="363" mass="38539">MSNQDLINNKSKAGLTYAKAGVNIDMGNAMVEKIKPFIRATKRAGADAEIGGFGGLFDLKAAGFTDPILVAANDGVGTKLKIAIEVGHHNTVGIDLVAMCVNDLLVQGAEPLFFLDYFATGKLDPEQGAAIVSGIAEGCKQSGAALIGGETAEMPGMYAEGDYDLAGFAVGACERSMLLPSKNLTEGDIILGLSASGIHSNGFSLVRRIIEQNDLKWNDPAPFDPSNNLGVALLTPTRIYVKSLLPIMRKYEGVKALAHITGGGFLENIPRVIPSSLCAEINLSTINVPSVFSWIAKQGKIEETEMLRTFNCGIGMIIIVGQHTAEAVTQALEKNGETVTPLGILTKRQDQNKGILYRGVLHL</sequence>
<accession>A9IVF6</accession>
<keyword id="KW-0067">ATP-binding</keyword>
<keyword id="KW-0963">Cytoplasm</keyword>
<keyword id="KW-0436">Ligase</keyword>
<keyword id="KW-0547">Nucleotide-binding</keyword>
<keyword id="KW-0658">Purine biosynthesis</keyword>